<sequence>MQEIIASVDHIKFDLEIAVEQQLGAQPLPFPGMDKSGAAVCEFFLKAACGKGGMCPFRHISGEKTVVCKHWLRGLCKKGDQCEFLHEYDMTKMPECYFYSKFGECSNKECPFLHIDPESKIKDCPWYDRGFCKHGPLCRHRHTRRVICVNYLVGFCPEGPSCKFMHPRFELPMGTTEQPPLPQQTQPPTKRTPQVIGVMQSQNSSAGSRGPRPLEQVTCYKCGEKGHYANRCTKGHLAFLSGQ</sequence>
<comment type="function">
    <text evidence="6">Component of the cleavage and polyadenylation specificity factor (CPSF) complex that play a key role in pre-mRNA 3'-end formation, recognizing the AAUAAA signal sequence and interacting with poly(A) polymerase and other factors to bring about cleavage and poly(A) addition. CPSF4 binds RNA polymers with a preference for poly(U).</text>
</comment>
<comment type="subunit">
    <text evidence="1">Component of the cleavage and polyadenylation specificity factor (CPSF) complex, composed of CPSF1, CPSF2, CPSF3, CPSF4 and FIP1L1. Interacts with FIP1L1 (By similarity).</text>
</comment>
<comment type="interaction">
    <interactant intactId="EBI-7894441">
        <id>O19137</id>
    </interactant>
    <interactant intactId="EBI-1779322">
        <id>P03120</id>
        <label>E2</label>
    </interactant>
    <organismsDiffer>true</organismsDiffer>
    <experiments>3</experiments>
</comment>
<comment type="subcellular location">
    <subcellularLocation>
        <location evidence="1">Nucleus</location>
    </subcellularLocation>
</comment>
<comment type="similarity">
    <text evidence="7">Belongs to the CPSF4/YTH1 family.</text>
</comment>
<gene>
    <name type="primary">CPSF4</name>
    <name type="synonym">CPSF30</name>
</gene>
<keyword id="KW-0479">Metal-binding</keyword>
<keyword id="KW-0507">mRNA processing</keyword>
<keyword id="KW-0539">Nucleus</keyword>
<keyword id="KW-0597">Phosphoprotein</keyword>
<keyword id="KW-1185">Reference proteome</keyword>
<keyword id="KW-0677">Repeat</keyword>
<keyword id="KW-0694">RNA-binding</keyword>
<keyword id="KW-0862">Zinc</keyword>
<keyword id="KW-0863">Zinc-finger</keyword>
<protein>
    <recommendedName>
        <fullName>Cleavage and polyadenylation specificity factor subunit 4</fullName>
    </recommendedName>
    <alternativeName>
        <fullName>Cleavage and polyadenylation specificity factor 30 kDa subunit</fullName>
        <shortName>CPSF 30 kDa subunit</shortName>
    </alternativeName>
</protein>
<evidence type="ECO:0000250" key="1"/>
<evidence type="ECO:0000250" key="2">
    <source>
        <dbReference type="UniProtKB" id="O95639"/>
    </source>
</evidence>
<evidence type="ECO:0000255" key="3">
    <source>
        <dbReference type="PROSITE-ProRule" id="PRU00047"/>
    </source>
</evidence>
<evidence type="ECO:0000255" key="4">
    <source>
        <dbReference type="PROSITE-ProRule" id="PRU00723"/>
    </source>
</evidence>
<evidence type="ECO:0000256" key="5">
    <source>
        <dbReference type="SAM" id="MobiDB-lite"/>
    </source>
</evidence>
<evidence type="ECO:0000269" key="6">
    <source>
    </source>
</evidence>
<evidence type="ECO:0000305" key="7"/>
<feature type="chain" id="PRO_0000266020" description="Cleavage and polyadenylation specificity factor subunit 4">
    <location>
        <begin position="1"/>
        <end position="243"/>
    </location>
</feature>
<feature type="zinc finger region" description="C3H1-type 1" evidence="4">
    <location>
        <begin position="35"/>
        <end position="61"/>
    </location>
</feature>
<feature type="zinc finger region" description="C3H1-type 2" evidence="4">
    <location>
        <begin position="62"/>
        <end position="89"/>
    </location>
</feature>
<feature type="zinc finger region" description="C3H1-type 3" evidence="4">
    <location>
        <begin position="90"/>
        <end position="117"/>
    </location>
</feature>
<feature type="zinc finger region" description="C3H1-type 4" evidence="4">
    <location>
        <begin position="118"/>
        <end position="142"/>
    </location>
</feature>
<feature type="zinc finger region" description="C3H1-type 5" evidence="4">
    <location>
        <begin position="143"/>
        <end position="169"/>
    </location>
</feature>
<feature type="zinc finger region" description="CCHC-type" evidence="3">
    <location>
        <begin position="217"/>
        <end position="234"/>
    </location>
</feature>
<feature type="region of interest" description="Disordered" evidence="5">
    <location>
        <begin position="174"/>
        <end position="193"/>
    </location>
</feature>
<feature type="compositionally biased region" description="Low complexity" evidence="5">
    <location>
        <begin position="175"/>
        <end position="193"/>
    </location>
</feature>
<feature type="modified residue" description="Phosphoserine" evidence="2">
    <location>
        <position position="241"/>
    </location>
</feature>
<dbReference type="EMBL" id="U96448">
    <property type="protein sequence ID" value="AAC48759.1"/>
    <property type="molecule type" value="mRNA"/>
</dbReference>
<dbReference type="RefSeq" id="NP_776367.1">
    <property type="nucleotide sequence ID" value="NM_173942.2"/>
</dbReference>
<dbReference type="SMR" id="O19137"/>
<dbReference type="FunCoup" id="O19137">
    <property type="interactions" value="2971"/>
</dbReference>
<dbReference type="IntAct" id="O19137">
    <property type="interactions" value="1"/>
</dbReference>
<dbReference type="MINT" id="O19137"/>
<dbReference type="PaxDb" id="9913-ENSBTAP00000002701"/>
<dbReference type="GeneID" id="280875"/>
<dbReference type="KEGG" id="bta:280875"/>
<dbReference type="CTD" id="10898"/>
<dbReference type="VEuPathDB" id="HostDB:ENSBTAG00000002090"/>
<dbReference type="eggNOG" id="KOG1040">
    <property type="taxonomic scope" value="Eukaryota"/>
</dbReference>
<dbReference type="HOGENOM" id="CLU_024513_0_1_1"/>
<dbReference type="InParanoid" id="O19137"/>
<dbReference type="OMA" id="EEVTCFK"/>
<dbReference type="OrthoDB" id="1914176at2759"/>
<dbReference type="TreeFam" id="TF314871"/>
<dbReference type="Reactome" id="R-BTA-159231">
    <property type="pathway name" value="Transport of Mature mRNA Derived from an Intronless Transcript"/>
</dbReference>
<dbReference type="Reactome" id="R-BTA-72187">
    <property type="pathway name" value="mRNA 3'-end processing"/>
</dbReference>
<dbReference type="Reactome" id="R-BTA-72203">
    <property type="pathway name" value="Processing of Capped Intron-Containing Pre-mRNA"/>
</dbReference>
<dbReference type="Reactome" id="R-BTA-73856">
    <property type="pathway name" value="RNA Polymerase II Transcription Termination"/>
</dbReference>
<dbReference type="Reactome" id="R-BTA-77595">
    <property type="pathway name" value="Processing of Intronless Pre-mRNAs"/>
</dbReference>
<dbReference type="Proteomes" id="UP000009136">
    <property type="component" value="Chromosome 25"/>
</dbReference>
<dbReference type="Bgee" id="ENSBTAG00000002090">
    <property type="expression patterns" value="Expressed in biceps femoris and 106 other cell types or tissues"/>
</dbReference>
<dbReference type="GO" id="GO:0005847">
    <property type="term" value="C:mRNA cleavage and polyadenylation specificity factor complex"/>
    <property type="evidence" value="ECO:0000250"/>
    <property type="project" value="UniProtKB"/>
</dbReference>
<dbReference type="GO" id="GO:0003723">
    <property type="term" value="F:RNA binding"/>
    <property type="evidence" value="ECO:0007669"/>
    <property type="project" value="UniProtKB-KW"/>
</dbReference>
<dbReference type="GO" id="GO:0008270">
    <property type="term" value="F:zinc ion binding"/>
    <property type="evidence" value="ECO:0007669"/>
    <property type="project" value="UniProtKB-KW"/>
</dbReference>
<dbReference type="GO" id="GO:0006397">
    <property type="term" value="P:mRNA processing"/>
    <property type="evidence" value="ECO:0007669"/>
    <property type="project" value="UniProtKB-KW"/>
</dbReference>
<dbReference type="FunFam" id="4.10.60.10:FF:000008">
    <property type="entry name" value="Cleavage and polyadenylation specificity factor subunit 4"/>
    <property type="match status" value="1"/>
</dbReference>
<dbReference type="FunFam" id="4.10.1000.10:FF:000005">
    <property type="entry name" value="cleavage and polyadenylation specificity factor subunit 4"/>
    <property type="match status" value="1"/>
</dbReference>
<dbReference type="FunFam" id="4.10.1000.10:FF:000019">
    <property type="entry name" value="cleavage and polyadenylation specificity factor subunit 4 isoform X2"/>
    <property type="match status" value="1"/>
</dbReference>
<dbReference type="Gene3D" id="4.10.1000.10">
    <property type="entry name" value="Zinc finger, CCCH-type"/>
    <property type="match status" value="2"/>
</dbReference>
<dbReference type="Gene3D" id="4.10.60.10">
    <property type="entry name" value="Zinc finger, CCHC-type"/>
    <property type="match status" value="1"/>
</dbReference>
<dbReference type="InterPro" id="IPR045348">
    <property type="entry name" value="CPSF4/Yth1"/>
</dbReference>
<dbReference type="InterPro" id="IPR041686">
    <property type="entry name" value="Znf-CCCH_3"/>
</dbReference>
<dbReference type="InterPro" id="IPR000571">
    <property type="entry name" value="Znf_CCCH"/>
</dbReference>
<dbReference type="InterPro" id="IPR036855">
    <property type="entry name" value="Znf_CCCH_sf"/>
</dbReference>
<dbReference type="InterPro" id="IPR001878">
    <property type="entry name" value="Znf_CCHC"/>
</dbReference>
<dbReference type="InterPro" id="IPR036875">
    <property type="entry name" value="Znf_CCHC_sf"/>
</dbReference>
<dbReference type="PANTHER" id="PTHR23102:SF18">
    <property type="entry name" value="CLEAVAGE AND POLYADENYLATION SPECIFICITY FACTOR SUBUNIT 4"/>
    <property type="match status" value="1"/>
</dbReference>
<dbReference type="PANTHER" id="PTHR23102">
    <property type="entry name" value="CLEAVAGE AND POLYADENYLATION SPECIFICITY FACTOR SUBUNIT 4-RELATED"/>
    <property type="match status" value="1"/>
</dbReference>
<dbReference type="Pfam" id="PF00642">
    <property type="entry name" value="zf-CCCH"/>
    <property type="match status" value="1"/>
</dbReference>
<dbReference type="Pfam" id="PF15663">
    <property type="entry name" value="zf-CCCH_3"/>
    <property type="match status" value="1"/>
</dbReference>
<dbReference type="Pfam" id="PF00098">
    <property type="entry name" value="zf-CCHC"/>
    <property type="match status" value="1"/>
</dbReference>
<dbReference type="SMART" id="SM00343">
    <property type="entry name" value="ZnF_C2HC"/>
    <property type="match status" value="1"/>
</dbReference>
<dbReference type="SMART" id="SM00356">
    <property type="entry name" value="ZnF_C3H1"/>
    <property type="match status" value="5"/>
</dbReference>
<dbReference type="SUPFAM" id="SSF90229">
    <property type="entry name" value="CCCH zinc finger"/>
    <property type="match status" value="2"/>
</dbReference>
<dbReference type="SUPFAM" id="SSF57756">
    <property type="entry name" value="Retrovirus zinc finger-like domains"/>
    <property type="match status" value="1"/>
</dbReference>
<dbReference type="PROSITE" id="PS50103">
    <property type="entry name" value="ZF_C3H1"/>
    <property type="match status" value="5"/>
</dbReference>
<dbReference type="PROSITE" id="PS50158">
    <property type="entry name" value="ZF_CCHC"/>
    <property type="match status" value="1"/>
</dbReference>
<proteinExistence type="evidence at protein level"/>
<organism>
    <name type="scientific">Bos taurus</name>
    <name type="common">Bovine</name>
    <dbReference type="NCBI Taxonomy" id="9913"/>
    <lineage>
        <taxon>Eukaryota</taxon>
        <taxon>Metazoa</taxon>
        <taxon>Chordata</taxon>
        <taxon>Craniata</taxon>
        <taxon>Vertebrata</taxon>
        <taxon>Euteleostomi</taxon>
        <taxon>Mammalia</taxon>
        <taxon>Eutheria</taxon>
        <taxon>Laurasiatheria</taxon>
        <taxon>Artiodactyla</taxon>
        <taxon>Ruminantia</taxon>
        <taxon>Pecora</taxon>
        <taxon>Bovidae</taxon>
        <taxon>Bovinae</taxon>
        <taxon>Bos</taxon>
    </lineage>
</organism>
<reference key="1">
    <citation type="journal article" date="1997" name="Genes Dev.">
        <title>The 30-kD subunit of mammalian cleavage and polyadenylation specificity factor and its yeast homolog are RNA-binding zinc finger proteins.</title>
        <authorList>
            <person name="Barabino S.M.L."/>
            <person name="Huebner W."/>
            <person name="Jenny A."/>
            <person name="Minvielle-Sebastia L."/>
            <person name="Keller W."/>
        </authorList>
    </citation>
    <scope>NUCLEOTIDE SEQUENCE [MRNA]</scope>
    <scope>FUNCTION</scope>
</reference>
<accession>O19137</accession>
<name>CPSF4_BOVIN</name>